<gene>
    <name evidence="1" type="primary">ruvA</name>
    <name type="ordered locus">BRADO1145</name>
</gene>
<accession>A4YMC6</accession>
<dbReference type="EMBL" id="CU234118">
    <property type="protein sequence ID" value="CAL75052.1"/>
    <property type="molecule type" value="Genomic_DNA"/>
</dbReference>
<dbReference type="RefSeq" id="WP_011924296.1">
    <property type="nucleotide sequence ID" value="NC_009445.1"/>
</dbReference>
<dbReference type="SMR" id="A4YMC6"/>
<dbReference type="STRING" id="114615.BRADO1145"/>
<dbReference type="KEGG" id="bra:BRADO1145"/>
<dbReference type="eggNOG" id="COG0632">
    <property type="taxonomic scope" value="Bacteria"/>
</dbReference>
<dbReference type="HOGENOM" id="CLU_087936_3_0_5"/>
<dbReference type="OrthoDB" id="5293449at2"/>
<dbReference type="Proteomes" id="UP000001994">
    <property type="component" value="Chromosome"/>
</dbReference>
<dbReference type="GO" id="GO:0005737">
    <property type="term" value="C:cytoplasm"/>
    <property type="evidence" value="ECO:0007669"/>
    <property type="project" value="UniProtKB-SubCell"/>
</dbReference>
<dbReference type="GO" id="GO:0009379">
    <property type="term" value="C:Holliday junction helicase complex"/>
    <property type="evidence" value="ECO:0007669"/>
    <property type="project" value="InterPro"/>
</dbReference>
<dbReference type="GO" id="GO:0048476">
    <property type="term" value="C:Holliday junction resolvase complex"/>
    <property type="evidence" value="ECO:0007669"/>
    <property type="project" value="UniProtKB-UniRule"/>
</dbReference>
<dbReference type="GO" id="GO:0005524">
    <property type="term" value="F:ATP binding"/>
    <property type="evidence" value="ECO:0007669"/>
    <property type="project" value="InterPro"/>
</dbReference>
<dbReference type="GO" id="GO:0000400">
    <property type="term" value="F:four-way junction DNA binding"/>
    <property type="evidence" value="ECO:0007669"/>
    <property type="project" value="UniProtKB-UniRule"/>
</dbReference>
<dbReference type="GO" id="GO:0009378">
    <property type="term" value="F:four-way junction helicase activity"/>
    <property type="evidence" value="ECO:0007669"/>
    <property type="project" value="InterPro"/>
</dbReference>
<dbReference type="GO" id="GO:0006310">
    <property type="term" value="P:DNA recombination"/>
    <property type="evidence" value="ECO:0007669"/>
    <property type="project" value="UniProtKB-UniRule"/>
</dbReference>
<dbReference type="GO" id="GO:0006281">
    <property type="term" value="P:DNA repair"/>
    <property type="evidence" value="ECO:0007669"/>
    <property type="project" value="UniProtKB-UniRule"/>
</dbReference>
<dbReference type="Gene3D" id="1.10.150.20">
    <property type="entry name" value="5' to 3' exonuclease, C-terminal subdomain"/>
    <property type="match status" value="1"/>
</dbReference>
<dbReference type="Gene3D" id="1.10.8.10">
    <property type="entry name" value="DNA helicase RuvA subunit, C-terminal domain"/>
    <property type="match status" value="1"/>
</dbReference>
<dbReference type="Gene3D" id="2.40.50.140">
    <property type="entry name" value="Nucleic acid-binding proteins"/>
    <property type="match status" value="1"/>
</dbReference>
<dbReference type="HAMAP" id="MF_00031">
    <property type="entry name" value="DNA_HJ_migration_RuvA"/>
    <property type="match status" value="1"/>
</dbReference>
<dbReference type="InterPro" id="IPR013849">
    <property type="entry name" value="DNA_helicase_Holl-junc_RuvA_I"/>
</dbReference>
<dbReference type="InterPro" id="IPR003583">
    <property type="entry name" value="Hlx-hairpin-Hlx_DNA-bd_motif"/>
</dbReference>
<dbReference type="InterPro" id="IPR012340">
    <property type="entry name" value="NA-bd_OB-fold"/>
</dbReference>
<dbReference type="InterPro" id="IPR000085">
    <property type="entry name" value="RuvA"/>
</dbReference>
<dbReference type="InterPro" id="IPR010994">
    <property type="entry name" value="RuvA_2-like"/>
</dbReference>
<dbReference type="InterPro" id="IPR011114">
    <property type="entry name" value="RuvA_C"/>
</dbReference>
<dbReference type="InterPro" id="IPR036267">
    <property type="entry name" value="RuvA_C_sf"/>
</dbReference>
<dbReference type="NCBIfam" id="TIGR00084">
    <property type="entry name" value="ruvA"/>
    <property type="match status" value="1"/>
</dbReference>
<dbReference type="Pfam" id="PF14520">
    <property type="entry name" value="HHH_5"/>
    <property type="match status" value="1"/>
</dbReference>
<dbReference type="Pfam" id="PF07499">
    <property type="entry name" value="RuvA_C"/>
    <property type="match status" value="1"/>
</dbReference>
<dbReference type="Pfam" id="PF01330">
    <property type="entry name" value="RuvA_N"/>
    <property type="match status" value="1"/>
</dbReference>
<dbReference type="SMART" id="SM00278">
    <property type="entry name" value="HhH1"/>
    <property type="match status" value="2"/>
</dbReference>
<dbReference type="SUPFAM" id="SSF46929">
    <property type="entry name" value="DNA helicase RuvA subunit, C-terminal domain"/>
    <property type="match status" value="1"/>
</dbReference>
<dbReference type="SUPFAM" id="SSF50249">
    <property type="entry name" value="Nucleic acid-binding proteins"/>
    <property type="match status" value="1"/>
</dbReference>
<dbReference type="SUPFAM" id="SSF47781">
    <property type="entry name" value="RuvA domain 2-like"/>
    <property type="match status" value="1"/>
</dbReference>
<protein>
    <recommendedName>
        <fullName evidence="1">Holliday junction branch migration complex subunit RuvA</fullName>
    </recommendedName>
</protein>
<comment type="function">
    <text evidence="1">The RuvA-RuvB-RuvC complex processes Holliday junction (HJ) DNA during genetic recombination and DNA repair, while the RuvA-RuvB complex plays an important role in the rescue of blocked DNA replication forks via replication fork reversal (RFR). RuvA specifically binds to HJ cruciform DNA, conferring on it an open structure. The RuvB hexamer acts as an ATP-dependent pump, pulling dsDNA into and through the RuvAB complex. HJ branch migration allows RuvC to scan DNA until it finds its consensus sequence, where it cleaves and resolves the cruciform DNA.</text>
</comment>
<comment type="subunit">
    <text evidence="1">Homotetramer. Forms an RuvA(8)-RuvB(12)-Holliday junction (HJ) complex. HJ DNA is sandwiched between 2 RuvA tetramers; dsDNA enters through RuvA and exits via RuvB. An RuvB hexamer assembles on each DNA strand where it exits the tetramer. Each RuvB hexamer is contacted by two RuvA subunits (via domain III) on 2 adjacent RuvB subunits; this complex drives branch migration. In the full resolvosome a probable DNA-RuvA(4)-RuvB(12)-RuvC(2) complex forms which resolves the HJ.</text>
</comment>
<comment type="subcellular location">
    <subcellularLocation>
        <location evidence="1">Cytoplasm</location>
    </subcellularLocation>
</comment>
<comment type="domain">
    <text evidence="1">Has three domains with a flexible linker between the domains II and III and assumes an 'L' shape. Domain III is highly mobile and contacts RuvB.</text>
</comment>
<comment type="similarity">
    <text evidence="1">Belongs to the RuvA family.</text>
</comment>
<name>RUVA_BRASO</name>
<feature type="chain" id="PRO_1000002405" description="Holliday junction branch migration complex subunit RuvA">
    <location>
        <begin position="1"/>
        <end position="205"/>
    </location>
</feature>
<feature type="region of interest" description="Domain I" evidence="1">
    <location>
        <begin position="1"/>
        <end position="64"/>
    </location>
</feature>
<feature type="region of interest" description="Domain II" evidence="1">
    <location>
        <begin position="65"/>
        <end position="143"/>
    </location>
</feature>
<feature type="region of interest" description="Flexible linker" evidence="1">
    <location>
        <begin position="144"/>
        <end position="154"/>
    </location>
</feature>
<feature type="region of interest" description="Domain III" evidence="1">
    <location>
        <begin position="154"/>
        <end position="205"/>
    </location>
</feature>
<reference key="1">
    <citation type="journal article" date="2007" name="Science">
        <title>Legumes symbioses: absence of nod genes in photosynthetic bradyrhizobia.</title>
        <authorList>
            <person name="Giraud E."/>
            <person name="Moulin L."/>
            <person name="Vallenet D."/>
            <person name="Barbe V."/>
            <person name="Cytryn E."/>
            <person name="Avarre J.-C."/>
            <person name="Jaubert M."/>
            <person name="Simon D."/>
            <person name="Cartieaux F."/>
            <person name="Prin Y."/>
            <person name="Bena G."/>
            <person name="Hannibal L."/>
            <person name="Fardoux J."/>
            <person name="Kojadinovic M."/>
            <person name="Vuillet L."/>
            <person name="Lajus A."/>
            <person name="Cruveiller S."/>
            <person name="Rouy Z."/>
            <person name="Mangenot S."/>
            <person name="Segurens B."/>
            <person name="Dossat C."/>
            <person name="Franck W.L."/>
            <person name="Chang W.-S."/>
            <person name="Saunders E."/>
            <person name="Bruce D."/>
            <person name="Richardson P."/>
            <person name="Normand P."/>
            <person name="Dreyfus B."/>
            <person name="Pignol D."/>
            <person name="Stacey G."/>
            <person name="Emerich D."/>
            <person name="Vermeglio A."/>
            <person name="Medigue C."/>
            <person name="Sadowsky M."/>
        </authorList>
    </citation>
    <scope>NUCLEOTIDE SEQUENCE [LARGE SCALE GENOMIC DNA]</scope>
    <source>
        <strain>ORS 278</strain>
    </source>
</reference>
<organism>
    <name type="scientific">Bradyrhizobium sp. (strain ORS 278)</name>
    <dbReference type="NCBI Taxonomy" id="114615"/>
    <lineage>
        <taxon>Bacteria</taxon>
        <taxon>Pseudomonadati</taxon>
        <taxon>Pseudomonadota</taxon>
        <taxon>Alphaproteobacteria</taxon>
        <taxon>Hyphomicrobiales</taxon>
        <taxon>Nitrobacteraceae</taxon>
        <taxon>Bradyrhizobium</taxon>
    </lineage>
</organism>
<proteinExistence type="inferred from homology"/>
<sequence>MIGKLRGLIDSYAEDFVIIDVGGVGYQVHCSARTLQALPSPGEAATLSIETYVREDQIKLFGFRSDVEREWFRLLQTVQGVGAKVALAVLGTLPPADLGNAIALRDKAAVARTPGVGPKVAERIVTELKDKAPAFANVDPGVVRLSGAIEESRAPQPVADAISALINLGYGQPQAAAAIAAASRAAGDKAETAQLIRLGLKELAK</sequence>
<keyword id="KW-0963">Cytoplasm</keyword>
<keyword id="KW-0227">DNA damage</keyword>
<keyword id="KW-0233">DNA recombination</keyword>
<keyword id="KW-0234">DNA repair</keyword>
<keyword id="KW-0238">DNA-binding</keyword>
<keyword id="KW-1185">Reference proteome</keyword>
<evidence type="ECO:0000255" key="1">
    <source>
        <dbReference type="HAMAP-Rule" id="MF_00031"/>
    </source>
</evidence>